<proteinExistence type="evidence at protein level"/>
<accession>E2D0Y9</accession>
<reference evidence="9" key="1">
    <citation type="journal article" date="2012" name="FEBS J.">
        <title>The natural profilin from Russian thistle (Salsola kali) contains a low IgE-binding ability isoform--molecular and immunological characterization.</title>
        <authorList>
            <person name="Mas S."/>
            <person name="Barderas R."/>
            <person name="Colas C."/>
            <person name="Quiralte J."/>
            <person name="Rodriguez R."/>
            <person name="Villalba M."/>
        </authorList>
    </citation>
    <scope>NUCLEOTIDE SEQUENCE [MRNA]</scope>
    <scope>3D-STRUCTURE MODELING</scope>
    <scope>TISSUE SPECIFICITY</scope>
    <scope>ALLERGEN</scope>
    <source>
        <tissue evidence="7 9">Pollen</tissue>
    </source>
</reference>
<keyword id="KW-0009">Actin-binding</keyword>
<keyword id="KW-0020">Allergen</keyword>
<keyword id="KW-0963">Cytoplasm</keyword>
<keyword id="KW-0206">Cytoskeleton</keyword>
<keyword id="KW-1015">Disulfide bond</keyword>
<dbReference type="EMBL" id="GQ427675">
    <property type="protein sequence ID" value="ADK22841.1"/>
    <property type="molecule type" value="mRNA"/>
</dbReference>
<dbReference type="SMR" id="E2D0Y9"/>
<dbReference type="Allergome" id="2099">
    <property type="allergen name" value="Sal k 4"/>
</dbReference>
<dbReference type="Allergome" id="8201">
    <property type="allergen name" value="Sal k 4.0201"/>
</dbReference>
<dbReference type="GO" id="GO:0005938">
    <property type="term" value="C:cell cortex"/>
    <property type="evidence" value="ECO:0007669"/>
    <property type="project" value="TreeGrafter"/>
</dbReference>
<dbReference type="GO" id="GO:0005856">
    <property type="term" value="C:cytoskeleton"/>
    <property type="evidence" value="ECO:0000250"/>
    <property type="project" value="UniProtKB"/>
</dbReference>
<dbReference type="GO" id="GO:0003785">
    <property type="term" value="F:actin monomer binding"/>
    <property type="evidence" value="ECO:0007669"/>
    <property type="project" value="TreeGrafter"/>
</dbReference>
<dbReference type="CDD" id="cd00148">
    <property type="entry name" value="PROF"/>
    <property type="match status" value="1"/>
</dbReference>
<dbReference type="FunFam" id="3.30.450.30:FF:000001">
    <property type="entry name" value="Profilin"/>
    <property type="match status" value="1"/>
</dbReference>
<dbReference type="Gene3D" id="3.30.450.30">
    <property type="entry name" value="Dynein light chain 2a, cytoplasmic"/>
    <property type="match status" value="1"/>
</dbReference>
<dbReference type="InterPro" id="IPR048278">
    <property type="entry name" value="PFN"/>
</dbReference>
<dbReference type="InterPro" id="IPR005455">
    <property type="entry name" value="PFN_euk"/>
</dbReference>
<dbReference type="InterPro" id="IPR036140">
    <property type="entry name" value="PFN_sf"/>
</dbReference>
<dbReference type="InterPro" id="IPR027310">
    <property type="entry name" value="Profilin_CS"/>
</dbReference>
<dbReference type="PANTHER" id="PTHR11604">
    <property type="entry name" value="PROFILIN"/>
    <property type="match status" value="1"/>
</dbReference>
<dbReference type="PANTHER" id="PTHR11604:SF25">
    <property type="entry name" value="PROFILIN-5"/>
    <property type="match status" value="1"/>
</dbReference>
<dbReference type="Pfam" id="PF00235">
    <property type="entry name" value="Profilin"/>
    <property type="match status" value="1"/>
</dbReference>
<dbReference type="PRINTS" id="PR00392">
    <property type="entry name" value="PROFILIN"/>
</dbReference>
<dbReference type="PRINTS" id="PR01640">
    <property type="entry name" value="PROFILINPLNT"/>
</dbReference>
<dbReference type="SMART" id="SM00392">
    <property type="entry name" value="PROF"/>
    <property type="match status" value="1"/>
</dbReference>
<dbReference type="SUPFAM" id="SSF55770">
    <property type="entry name" value="Profilin (actin-binding protein)"/>
    <property type="match status" value="1"/>
</dbReference>
<dbReference type="PROSITE" id="PS00414">
    <property type="entry name" value="PROFILIN"/>
    <property type="match status" value="1"/>
</dbReference>
<comment type="function">
    <text evidence="4">Binds to actin and affects the structure of the cytoskeleton. At high concentrations, profilin prevents the polymerization of actin, whereas it enhances it at low concentrations.</text>
</comment>
<comment type="subunit">
    <text evidence="4">Occurs in many kinds of cells as a complex with monomeric actin in a 1:1 ratio.</text>
</comment>
<comment type="subcellular location">
    <subcellularLocation>
        <location evidence="1">Cytoplasm</location>
        <location evidence="1">Cytoskeleton</location>
    </subcellularLocation>
</comment>
<comment type="tissue specificity">
    <text evidence="6">Expressed in pollen (at protein and mRNA level).</text>
</comment>
<comment type="allergen">
    <text evidence="6">Causes an allergic reaction in human. Binds to IgE in 24% of the 165 Spanish patients tested allergic to S.kali and/or C.album pollen. Reduced (by approximately 35%) IgE-binding capacity compared to Sal k 4.03 in 86% of the patients who have positive IgE-binding to the three profilins, Sal k 4.02, Sal k 4.03 and Che a 2.</text>
</comment>
<comment type="similarity">
    <text evidence="3 5 8">Belongs to the profilin family.</text>
</comment>
<feature type="chain" id="PRO_0000447666" description="Profilin Sal k 4.0201">
    <location>
        <begin position="1"/>
        <end position="133"/>
    </location>
</feature>
<feature type="disulfide bond" evidence="2">
    <location>
        <begin position="95"/>
        <end position="117"/>
    </location>
</feature>
<name>PRF02_KALTU</name>
<protein>
    <recommendedName>
        <fullName evidence="8">Profilin Sal k 4.0201</fullName>
    </recommendedName>
    <alternativeName>
        <fullName evidence="7">Allergen Sal k 4.02</fullName>
    </alternativeName>
    <allergenName evidence="8">Sal k 4.0201</allergenName>
</protein>
<sequence length="133" mass="14340">MSWQAYVDEHLMCNIEDTGNHLTSSAIVGVDGSIWAQSSNFPQVKPQEIEAINKEFDGPNTLAPTGLFLGGEKYMVIQGEPGAVIRGKKGPGGVCIKKTTQALIFGIYDEPVAPGQCNMVVERLGDYLIEQGL</sequence>
<organism evidence="9">
    <name type="scientific">Kali turgidum</name>
    <name type="common">Prickly saltwort</name>
    <name type="synonym">Salsola kali</name>
    <dbReference type="NCBI Taxonomy" id="151250"/>
    <lineage>
        <taxon>Eukaryota</taxon>
        <taxon>Viridiplantae</taxon>
        <taxon>Streptophyta</taxon>
        <taxon>Embryophyta</taxon>
        <taxon>Tracheophyta</taxon>
        <taxon>Spermatophyta</taxon>
        <taxon>Magnoliopsida</taxon>
        <taxon>eudicotyledons</taxon>
        <taxon>Gunneridae</taxon>
        <taxon>Pentapetalae</taxon>
        <taxon>Caryophyllales</taxon>
        <taxon>Chenopodiaceae</taxon>
        <taxon>Salsoloideae</taxon>
        <taxon>Salsoleae</taxon>
        <taxon>Kali</taxon>
    </lineage>
</organism>
<evidence type="ECO:0000250" key="1">
    <source>
        <dbReference type="UniProtKB" id="P35081"/>
    </source>
</evidence>
<evidence type="ECO:0000250" key="2">
    <source>
        <dbReference type="UniProtKB" id="Q8H2C9"/>
    </source>
</evidence>
<evidence type="ECO:0000255" key="3"/>
<evidence type="ECO:0000255" key="4">
    <source>
        <dbReference type="RuleBase" id="RU003908"/>
    </source>
</evidence>
<evidence type="ECO:0000255" key="5">
    <source>
        <dbReference type="RuleBase" id="RU003909"/>
    </source>
</evidence>
<evidence type="ECO:0000269" key="6">
    <source>
    </source>
</evidence>
<evidence type="ECO:0000303" key="7">
    <source>
    </source>
</evidence>
<evidence type="ECO:0000305" key="8"/>
<evidence type="ECO:0000312" key="9">
    <source>
        <dbReference type="EMBL" id="ADK22841.1"/>
    </source>
</evidence>